<protein>
    <recommendedName>
        <fullName evidence="1">ATP-dependent protease ATPase subunit HslU</fullName>
    </recommendedName>
    <alternativeName>
        <fullName evidence="1">Unfoldase HslU</fullName>
    </alternativeName>
</protein>
<sequence>MEIDKELTPKQIVEELNKYIVGQYEAKKAVAVALRNRWRRQKLPEDLRDEVIPKNILMIGPTGVGKTEIARRLANLVKAPFIKVEATKFTEVGYVGRDVESIIRELVDVSFKMVKAEKMEEVREKAKAIAEEKILDYLVPKKPKRYGTLIEEEEESPAREKFREMLKNGQLDDKVVEIDVEEKVSAVVGGVVVPGLEDIESQLKELFSNLGPSKRKKRRLTVKEALKIIENEEAEKLIDMDEVQTLAVKRAENLGIVFIDEIDKVAARGSSKSGPDVSREGVQRDLLPIVEGTVVSTKYGPVKTDHILFIAAGAFHLAKPSDLIPELQGRFPIRVELKALTKDDFVKILTEPKNALIKQYIALMSTEGVELEFTEDAIQEIAQIAEEVNERTENIGARRLHTILERIMEDYSFNAPDLKGQKIVIDSKLVREKLGNVITNEDLTRYIL</sequence>
<organism>
    <name type="scientific">Sulfurihydrogenibium sp. (strain YO3AOP1)</name>
    <dbReference type="NCBI Taxonomy" id="436114"/>
    <lineage>
        <taxon>Bacteria</taxon>
        <taxon>Pseudomonadati</taxon>
        <taxon>Aquificota</taxon>
        <taxon>Aquificia</taxon>
        <taxon>Aquificales</taxon>
        <taxon>Hydrogenothermaceae</taxon>
        <taxon>Sulfurihydrogenibium</taxon>
    </lineage>
</organism>
<feature type="chain" id="PRO_1000100978" description="ATP-dependent protease ATPase subunit HslU">
    <location>
        <begin position="1"/>
        <end position="448"/>
    </location>
</feature>
<feature type="binding site" evidence="1">
    <location>
        <position position="21"/>
    </location>
    <ligand>
        <name>ATP</name>
        <dbReference type="ChEBI" id="CHEBI:30616"/>
    </ligand>
</feature>
<feature type="binding site" evidence="1">
    <location>
        <begin position="63"/>
        <end position="68"/>
    </location>
    <ligand>
        <name>ATP</name>
        <dbReference type="ChEBI" id="CHEBI:30616"/>
    </ligand>
</feature>
<feature type="binding site" evidence="1">
    <location>
        <position position="260"/>
    </location>
    <ligand>
        <name>ATP</name>
        <dbReference type="ChEBI" id="CHEBI:30616"/>
    </ligand>
</feature>
<feature type="binding site" evidence="1">
    <location>
        <position position="326"/>
    </location>
    <ligand>
        <name>ATP</name>
        <dbReference type="ChEBI" id="CHEBI:30616"/>
    </ligand>
</feature>
<feature type="binding site" evidence="1">
    <location>
        <position position="398"/>
    </location>
    <ligand>
        <name>ATP</name>
        <dbReference type="ChEBI" id="CHEBI:30616"/>
    </ligand>
</feature>
<name>HSLU_SULSY</name>
<dbReference type="EMBL" id="CP001080">
    <property type="protein sequence ID" value="ACD67183.1"/>
    <property type="molecule type" value="Genomic_DNA"/>
</dbReference>
<dbReference type="RefSeq" id="WP_012460239.1">
    <property type="nucleotide sequence ID" value="NC_010730.1"/>
</dbReference>
<dbReference type="SMR" id="B2V6B0"/>
<dbReference type="STRING" id="436114.SYO3AOP1_1585"/>
<dbReference type="KEGG" id="sul:SYO3AOP1_1585"/>
<dbReference type="eggNOG" id="COG1220">
    <property type="taxonomic scope" value="Bacteria"/>
</dbReference>
<dbReference type="HOGENOM" id="CLU_033123_0_0_0"/>
<dbReference type="GO" id="GO:0009376">
    <property type="term" value="C:HslUV protease complex"/>
    <property type="evidence" value="ECO:0007669"/>
    <property type="project" value="UniProtKB-UniRule"/>
</dbReference>
<dbReference type="GO" id="GO:0005524">
    <property type="term" value="F:ATP binding"/>
    <property type="evidence" value="ECO:0007669"/>
    <property type="project" value="UniProtKB-UniRule"/>
</dbReference>
<dbReference type="GO" id="GO:0016887">
    <property type="term" value="F:ATP hydrolysis activity"/>
    <property type="evidence" value="ECO:0007669"/>
    <property type="project" value="InterPro"/>
</dbReference>
<dbReference type="GO" id="GO:0008233">
    <property type="term" value="F:peptidase activity"/>
    <property type="evidence" value="ECO:0007669"/>
    <property type="project" value="InterPro"/>
</dbReference>
<dbReference type="GO" id="GO:0036402">
    <property type="term" value="F:proteasome-activating activity"/>
    <property type="evidence" value="ECO:0007669"/>
    <property type="project" value="UniProtKB-UniRule"/>
</dbReference>
<dbReference type="GO" id="GO:0043335">
    <property type="term" value="P:protein unfolding"/>
    <property type="evidence" value="ECO:0007669"/>
    <property type="project" value="UniProtKB-UniRule"/>
</dbReference>
<dbReference type="GO" id="GO:0051603">
    <property type="term" value="P:proteolysis involved in protein catabolic process"/>
    <property type="evidence" value="ECO:0007669"/>
    <property type="project" value="TreeGrafter"/>
</dbReference>
<dbReference type="CDD" id="cd19498">
    <property type="entry name" value="RecA-like_HslU"/>
    <property type="match status" value="1"/>
</dbReference>
<dbReference type="FunFam" id="3.40.50.300:FF:000213">
    <property type="entry name" value="ATP-dependent protease ATPase subunit HslU"/>
    <property type="match status" value="1"/>
</dbReference>
<dbReference type="FunFam" id="3.40.50.300:FF:000220">
    <property type="entry name" value="ATP-dependent protease ATPase subunit HslU"/>
    <property type="match status" value="1"/>
</dbReference>
<dbReference type="Gene3D" id="1.10.8.60">
    <property type="match status" value="1"/>
</dbReference>
<dbReference type="Gene3D" id="1.10.8.10">
    <property type="entry name" value="DNA helicase RuvA subunit, C-terminal domain"/>
    <property type="match status" value="1"/>
</dbReference>
<dbReference type="Gene3D" id="3.40.50.300">
    <property type="entry name" value="P-loop containing nucleotide triphosphate hydrolases"/>
    <property type="match status" value="2"/>
</dbReference>
<dbReference type="HAMAP" id="MF_00249">
    <property type="entry name" value="HslU"/>
    <property type="match status" value="1"/>
</dbReference>
<dbReference type="InterPro" id="IPR003593">
    <property type="entry name" value="AAA+_ATPase"/>
</dbReference>
<dbReference type="InterPro" id="IPR050052">
    <property type="entry name" value="ATP-dep_Clp_protease_ClpX"/>
</dbReference>
<dbReference type="InterPro" id="IPR003959">
    <property type="entry name" value="ATPase_AAA_core"/>
</dbReference>
<dbReference type="InterPro" id="IPR019489">
    <property type="entry name" value="Clp_ATPase_C"/>
</dbReference>
<dbReference type="InterPro" id="IPR004491">
    <property type="entry name" value="HslU"/>
</dbReference>
<dbReference type="InterPro" id="IPR027417">
    <property type="entry name" value="P-loop_NTPase"/>
</dbReference>
<dbReference type="NCBIfam" id="TIGR00390">
    <property type="entry name" value="hslU"/>
    <property type="match status" value="1"/>
</dbReference>
<dbReference type="NCBIfam" id="NF003544">
    <property type="entry name" value="PRK05201.1"/>
    <property type="match status" value="1"/>
</dbReference>
<dbReference type="PANTHER" id="PTHR48102">
    <property type="entry name" value="ATP-DEPENDENT CLP PROTEASE ATP-BINDING SUBUNIT CLPX-LIKE, MITOCHONDRIAL-RELATED"/>
    <property type="match status" value="1"/>
</dbReference>
<dbReference type="PANTHER" id="PTHR48102:SF3">
    <property type="entry name" value="ATP-DEPENDENT PROTEASE ATPASE SUBUNIT HSLU"/>
    <property type="match status" value="1"/>
</dbReference>
<dbReference type="Pfam" id="PF00004">
    <property type="entry name" value="AAA"/>
    <property type="match status" value="1"/>
</dbReference>
<dbReference type="Pfam" id="PF07724">
    <property type="entry name" value="AAA_2"/>
    <property type="match status" value="1"/>
</dbReference>
<dbReference type="SMART" id="SM00382">
    <property type="entry name" value="AAA"/>
    <property type="match status" value="1"/>
</dbReference>
<dbReference type="SMART" id="SM01086">
    <property type="entry name" value="ClpB_D2-small"/>
    <property type="match status" value="1"/>
</dbReference>
<dbReference type="SUPFAM" id="SSF52540">
    <property type="entry name" value="P-loop containing nucleoside triphosphate hydrolases"/>
    <property type="match status" value="1"/>
</dbReference>
<gene>
    <name evidence="1" type="primary">hslU</name>
    <name type="ordered locus">SYO3AOP1_1585</name>
</gene>
<evidence type="ECO:0000255" key="1">
    <source>
        <dbReference type="HAMAP-Rule" id="MF_00249"/>
    </source>
</evidence>
<reference key="1">
    <citation type="journal article" date="2009" name="J. Bacteriol.">
        <title>Complete and draft genome sequences of six members of the Aquificales.</title>
        <authorList>
            <person name="Reysenbach A.-L."/>
            <person name="Hamamura N."/>
            <person name="Podar M."/>
            <person name="Griffiths E."/>
            <person name="Ferreira S."/>
            <person name="Hochstein R."/>
            <person name="Heidelberg J."/>
            <person name="Johnson J."/>
            <person name="Mead D."/>
            <person name="Pohorille A."/>
            <person name="Sarmiento M."/>
            <person name="Schweighofer K."/>
            <person name="Seshadri R."/>
            <person name="Voytek M.A."/>
        </authorList>
    </citation>
    <scope>NUCLEOTIDE SEQUENCE [LARGE SCALE GENOMIC DNA]</scope>
    <source>
        <strain>YO3AOP1</strain>
    </source>
</reference>
<accession>B2V6B0</accession>
<comment type="function">
    <text evidence="1">ATPase subunit of a proteasome-like degradation complex; this subunit has chaperone activity. The binding of ATP and its subsequent hydrolysis by HslU are essential for unfolding of protein substrates subsequently hydrolyzed by HslV. HslU recognizes the N-terminal part of its protein substrates and unfolds these before they are guided to HslV for hydrolysis.</text>
</comment>
<comment type="subunit">
    <text evidence="1">A double ring-shaped homohexamer of HslV is capped on each side by a ring-shaped HslU homohexamer. The assembly of the HslU/HslV complex is dependent on binding of ATP.</text>
</comment>
<comment type="subcellular location">
    <subcellularLocation>
        <location evidence="1">Cytoplasm</location>
    </subcellularLocation>
</comment>
<comment type="similarity">
    <text evidence="1">Belongs to the ClpX chaperone family. HslU subfamily.</text>
</comment>
<proteinExistence type="inferred from homology"/>
<keyword id="KW-0067">ATP-binding</keyword>
<keyword id="KW-0143">Chaperone</keyword>
<keyword id="KW-0963">Cytoplasm</keyword>
<keyword id="KW-0547">Nucleotide-binding</keyword>
<keyword id="KW-0346">Stress response</keyword>